<dbReference type="GO" id="GO:0005576">
    <property type="term" value="C:extracellular region"/>
    <property type="evidence" value="ECO:0007669"/>
    <property type="project" value="UniProtKB-SubCell"/>
</dbReference>
<dbReference type="GO" id="GO:0005184">
    <property type="term" value="F:neuropeptide hormone activity"/>
    <property type="evidence" value="ECO:0007669"/>
    <property type="project" value="InterPro"/>
</dbReference>
<dbReference type="GO" id="GO:0007218">
    <property type="term" value="P:neuropeptide signaling pathway"/>
    <property type="evidence" value="ECO:0007669"/>
    <property type="project" value="UniProtKB-KW"/>
</dbReference>
<dbReference type="InterPro" id="IPR001484">
    <property type="entry name" value="Pyrokinin_CS"/>
</dbReference>
<dbReference type="PROSITE" id="PS00539">
    <property type="entry name" value="PYROKININ"/>
    <property type="match status" value="1"/>
</dbReference>
<keyword id="KW-0027">Amidation</keyword>
<keyword id="KW-0903">Direct protein sequencing</keyword>
<keyword id="KW-0527">Neuropeptide</keyword>
<keyword id="KW-0964">Secreted</keyword>
<reference evidence="5" key="1">
    <citation type="journal article" date="2012" name="Syst. Biol.">
        <title>Peptidomics-based phylogeny and biogeography of Mantophasmatodea (Hexapoda).</title>
        <authorList>
            <person name="Predel R."/>
            <person name="Neupert S."/>
            <person name="Huetteroth W."/>
            <person name="Kahnt J."/>
            <person name="Waidelich D."/>
            <person name="Roth S."/>
        </authorList>
    </citation>
    <scope>PROTEIN SEQUENCE</scope>
    <scope>AMIDATION AT LEU-15</scope>
    <source>
        <tissue evidence="3">Abdominal perisympathetic organs</tissue>
    </source>
</reference>
<accession>B3A0F6</accession>
<comment type="function">
    <text evidence="1">Myoactive.</text>
</comment>
<comment type="subcellular location">
    <subcellularLocation>
        <location evidence="6">Secreted</location>
    </subcellularLocation>
</comment>
<comment type="similarity">
    <text evidence="2">Belongs to the pyrokinin family.</text>
</comment>
<evidence type="ECO:0000250" key="1">
    <source>
        <dbReference type="UniProtKB" id="P82617"/>
    </source>
</evidence>
<evidence type="ECO:0000255" key="2"/>
<evidence type="ECO:0000269" key="3">
    <source>
    </source>
</evidence>
<evidence type="ECO:0000303" key="4">
    <source>
    </source>
</evidence>
<evidence type="ECO:0000305" key="5"/>
<evidence type="ECO:0000305" key="6">
    <source>
    </source>
</evidence>
<proteinExistence type="evidence at protein level"/>
<organism>
    <name type="scientific">Praedatophasma maraisi</name>
    <name type="common">Gladiator</name>
    <name type="synonym">Heel-walker</name>
    <dbReference type="NCBI Taxonomy" id="409170"/>
    <lineage>
        <taxon>Eukaryota</taxon>
        <taxon>Metazoa</taxon>
        <taxon>Ecdysozoa</taxon>
        <taxon>Arthropoda</taxon>
        <taxon>Hexapoda</taxon>
        <taxon>Insecta</taxon>
        <taxon>Pterygota</taxon>
        <taxon>Neoptera</taxon>
        <taxon>Polyneoptera</taxon>
        <taxon>Mantophasmatodea</taxon>
        <taxon>Mantophasmatidae</taxon>
        <taxon>Praedatophasma</taxon>
    </lineage>
</organism>
<name>PPK5_PRAMA</name>
<feature type="peptide" id="PRO_0000421611" description="CAPA-Pyrokinin" evidence="3">
    <location>
        <begin position="1"/>
        <end position="15"/>
    </location>
</feature>
<feature type="modified residue" description="Leucine amide" evidence="3">
    <location>
        <position position="15"/>
    </location>
</feature>
<sequence length="15" mass="1495">SGGGEGSGMWFGPRL</sequence>
<protein>
    <recommendedName>
        <fullName evidence="4">CAPA-Pyrokinin</fullName>
        <shortName evidence="4">CAPA-PK</shortName>
    </recommendedName>
    <alternativeName>
        <fullName evidence="1">FXPRL-amide</fullName>
    </alternativeName>
</protein>